<feature type="chain" id="PRO_0000365434" description="Eukaryotic translation initiation factor 3 subunit G">
    <location>
        <begin position="1"/>
        <end position="290"/>
    </location>
</feature>
<feature type="domain" description="RRM" evidence="1">
    <location>
        <begin position="210"/>
        <end position="288"/>
    </location>
</feature>
<feature type="region of interest" description="Disordered" evidence="2">
    <location>
        <begin position="1"/>
        <end position="34"/>
    </location>
</feature>
<proteinExistence type="inferred from homology"/>
<dbReference type="EMBL" id="AAHF01000001">
    <property type="protein sequence ID" value="EAL93282.1"/>
    <property type="molecule type" value="Genomic_DNA"/>
</dbReference>
<dbReference type="RefSeq" id="XP_755320.1">
    <property type="nucleotide sequence ID" value="XM_750227.1"/>
</dbReference>
<dbReference type="SMR" id="Q4X1I3"/>
<dbReference type="FunCoup" id="Q4X1I3">
    <property type="interactions" value="1098"/>
</dbReference>
<dbReference type="STRING" id="330879.Q4X1I3"/>
<dbReference type="EnsemblFungi" id="EAL93282">
    <property type="protein sequence ID" value="EAL93282"/>
    <property type="gene ID" value="AFUA_2G09870"/>
</dbReference>
<dbReference type="GeneID" id="3513377"/>
<dbReference type="KEGG" id="afm:AFUA_2G09870"/>
<dbReference type="VEuPathDB" id="FungiDB:Afu2g09870"/>
<dbReference type="eggNOG" id="KOG0122">
    <property type="taxonomic scope" value="Eukaryota"/>
</dbReference>
<dbReference type="HOGENOM" id="CLU_034595_0_0_1"/>
<dbReference type="InParanoid" id="Q4X1I3"/>
<dbReference type="OMA" id="ICQGDHF"/>
<dbReference type="OrthoDB" id="639027at2759"/>
<dbReference type="PHI-base" id="PHI:2545"/>
<dbReference type="Proteomes" id="UP000002530">
    <property type="component" value="Chromosome 2"/>
</dbReference>
<dbReference type="GO" id="GO:0016282">
    <property type="term" value="C:eukaryotic 43S preinitiation complex"/>
    <property type="evidence" value="ECO:0007669"/>
    <property type="project" value="UniProtKB-UniRule"/>
</dbReference>
<dbReference type="GO" id="GO:0033290">
    <property type="term" value="C:eukaryotic 48S preinitiation complex"/>
    <property type="evidence" value="ECO:0007669"/>
    <property type="project" value="UniProtKB-UniRule"/>
</dbReference>
<dbReference type="GO" id="GO:0071540">
    <property type="term" value="C:eukaryotic translation initiation factor 3 complex, eIF3e"/>
    <property type="evidence" value="ECO:0007669"/>
    <property type="project" value="EnsemblFungi"/>
</dbReference>
<dbReference type="GO" id="GO:0071541">
    <property type="term" value="C:eukaryotic translation initiation factor 3 complex, eIF3m"/>
    <property type="evidence" value="ECO:0007669"/>
    <property type="project" value="EnsemblFungi"/>
</dbReference>
<dbReference type="GO" id="GO:0043614">
    <property type="term" value="C:multi-eIF complex"/>
    <property type="evidence" value="ECO:0007669"/>
    <property type="project" value="EnsemblFungi"/>
</dbReference>
<dbReference type="GO" id="GO:0003723">
    <property type="term" value="F:RNA binding"/>
    <property type="evidence" value="ECO:0007669"/>
    <property type="project" value="UniProtKB-UniRule"/>
</dbReference>
<dbReference type="GO" id="GO:0003743">
    <property type="term" value="F:translation initiation factor activity"/>
    <property type="evidence" value="ECO:0007669"/>
    <property type="project" value="UniProtKB-UniRule"/>
</dbReference>
<dbReference type="GO" id="GO:0001732">
    <property type="term" value="P:formation of cytoplasmic translation initiation complex"/>
    <property type="evidence" value="ECO:0007669"/>
    <property type="project" value="UniProtKB-UniRule"/>
</dbReference>
<dbReference type="GO" id="GO:0002188">
    <property type="term" value="P:translation reinitiation"/>
    <property type="evidence" value="ECO:0007669"/>
    <property type="project" value="EnsemblFungi"/>
</dbReference>
<dbReference type="GO" id="GO:0006415">
    <property type="term" value="P:translational termination"/>
    <property type="evidence" value="ECO:0007669"/>
    <property type="project" value="EnsemblFungi"/>
</dbReference>
<dbReference type="CDD" id="cd12933">
    <property type="entry name" value="eIF3G"/>
    <property type="match status" value="1"/>
</dbReference>
<dbReference type="CDD" id="cd12408">
    <property type="entry name" value="RRM_eIF3G_like"/>
    <property type="match status" value="1"/>
</dbReference>
<dbReference type="FunFam" id="3.30.70.330:FF:000328">
    <property type="entry name" value="Eukaryotic translation initiation factor 3 subunit G"/>
    <property type="match status" value="1"/>
</dbReference>
<dbReference type="Gene3D" id="3.30.70.330">
    <property type="match status" value="1"/>
</dbReference>
<dbReference type="HAMAP" id="MF_03006">
    <property type="entry name" value="eIF3g"/>
    <property type="match status" value="1"/>
</dbReference>
<dbReference type="InterPro" id="IPR017334">
    <property type="entry name" value="eIF3_g"/>
</dbReference>
<dbReference type="InterPro" id="IPR024675">
    <property type="entry name" value="eIF3g_N"/>
</dbReference>
<dbReference type="InterPro" id="IPR034240">
    <property type="entry name" value="eIF3G_RRM"/>
</dbReference>
<dbReference type="InterPro" id="IPR012677">
    <property type="entry name" value="Nucleotide-bd_a/b_plait_sf"/>
</dbReference>
<dbReference type="InterPro" id="IPR035979">
    <property type="entry name" value="RBD_domain_sf"/>
</dbReference>
<dbReference type="InterPro" id="IPR000504">
    <property type="entry name" value="RRM_dom"/>
</dbReference>
<dbReference type="PANTHER" id="PTHR10352">
    <property type="entry name" value="EUKARYOTIC TRANSLATION INITIATION FACTOR 3 SUBUNIT G"/>
    <property type="match status" value="1"/>
</dbReference>
<dbReference type="Pfam" id="PF12353">
    <property type="entry name" value="eIF3g"/>
    <property type="match status" value="1"/>
</dbReference>
<dbReference type="Pfam" id="PF00076">
    <property type="entry name" value="RRM_1"/>
    <property type="match status" value="1"/>
</dbReference>
<dbReference type="PIRSF" id="PIRSF037949">
    <property type="entry name" value="Transl_init_eIF-3_RNA-bind"/>
    <property type="match status" value="1"/>
</dbReference>
<dbReference type="SMART" id="SM00360">
    <property type="entry name" value="RRM"/>
    <property type="match status" value="1"/>
</dbReference>
<dbReference type="SUPFAM" id="SSF54928">
    <property type="entry name" value="RNA-binding domain, RBD"/>
    <property type="match status" value="1"/>
</dbReference>
<dbReference type="PROSITE" id="PS50102">
    <property type="entry name" value="RRM"/>
    <property type="match status" value="1"/>
</dbReference>
<reference key="1">
    <citation type="journal article" date="2005" name="Nature">
        <title>Genomic sequence of the pathogenic and allergenic filamentous fungus Aspergillus fumigatus.</title>
        <authorList>
            <person name="Nierman W.C."/>
            <person name="Pain A."/>
            <person name="Anderson M.J."/>
            <person name="Wortman J.R."/>
            <person name="Kim H.S."/>
            <person name="Arroyo J."/>
            <person name="Berriman M."/>
            <person name="Abe K."/>
            <person name="Archer D.B."/>
            <person name="Bermejo C."/>
            <person name="Bennett J.W."/>
            <person name="Bowyer P."/>
            <person name="Chen D."/>
            <person name="Collins M."/>
            <person name="Coulsen R."/>
            <person name="Davies R."/>
            <person name="Dyer P.S."/>
            <person name="Farman M.L."/>
            <person name="Fedorova N."/>
            <person name="Fedorova N.D."/>
            <person name="Feldblyum T.V."/>
            <person name="Fischer R."/>
            <person name="Fosker N."/>
            <person name="Fraser A."/>
            <person name="Garcia J.L."/>
            <person name="Garcia M.J."/>
            <person name="Goble A."/>
            <person name="Goldman G.H."/>
            <person name="Gomi K."/>
            <person name="Griffith-Jones S."/>
            <person name="Gwilliam R."/>
            <person name="Haas B.J."/>
            <person name="Haas H."/>
            <person name="Harris D.E."/>
            <person name="Horiuchi H."/>
            <person name="Huang J."/>
            <person name="Humphray S."/>
            <person name="Jimenez J."/>
            <person name="Keller N."/>
            <person name="Khouri H."/>
            <person name="Kitamoto K."/>
            <person name="Kobayashi T."/>
            <person name="Konzack S."/>
            <person name="Kulkarni R."/>
            <person name="Kumagai T."/>
            <person name="Lafton A."/>
            <person name="Latge J.-P."/>
            <person name="Li W."/>
            <person name="Lord A."/>
            <person name="Lu C."/>
            <person name="Majoros W.H."/>
            <person name="May G.S."/>
            <person name="Miller B.L."/>
            <person name="Mohamoud Y."/>
            <person name="Molina M."/>
            <person name="Monod M."/>
            <person name="Mouyna I."/>
            <person name="Mulligan S."/>
            <person name="Murphy L.D."/>
            <person name="O'Neil S."/>
            <person name="Paulsen I."/>
            <person name="Penalva M.A."/>
            <person name="Pertea M."/>
            <person name="Price C."/>
            <person name="Pritchard B.L."/>
            <person name="Quail M.A."/>
            <person name="Rabbinowitsch E."/>
            <person name="Rawlins N."/>
            <person name="Rajandream M.A."/>
            <person name="Reichard U."/>
            <person name="Renauld H."/>
            <person name="Robson G.D."/>
            <person name="Rodriguez de Cordoba S."/>
            <person name="Rodriguez-Pena J.M."/>
            <person name="Ronning C.M."/>
            <person name="Rutter S."/>
            <person name="Salzberg S.L."/>
            <person name="Sanchez M."/>
            <person name="Sanchez-Ferrero J.C."/>
            <person name="Saunders D."/>
            <person name="Seeger K."/>
            <person name="Squares R."/>
            <person name="Squares S."/>
            <person name="Takeuchi M."/>
            <person name="Tekaia F."/>
            <person name="Turner G."/>
            <person name="Vazquez de Aldana C.R."/>
            <person name="Weidman J."/>
            <person name="White O."/>
            <person name="Woodward J.R."/>
            <person name="Yu J.-H."/>
            <person name="Fraser C.M."/>
            <person name="Galagan J.E."/>
            <person name="Asai K."/>
            <person name="Machida M."/>
            <person name="Hall N."/>
            <person name="Barrell B.G."/>
            <person name="Denning D.W."/>
        </authorList>
    </citation>
    <scope>NUCLEOTIDE SEQUENCE [LARGE SCALE GENOMIC DNA]</scope>
    <source>
        <strain>ATCC MYA-4609 / CBS 101355 / FGSC A1100 / Af293</strain>
    </source>
</reference>
<sequence length="290" mass="31871">MSRLGNRAADWADDEEFDDPSALPAQQVTTNKDGTKTVVSYRFNDEGKKVKVTRRIKTTVVREHVNPQVAERRSWAKFGLEKGHAAGPSFDTTSVGENIVFRPSVNWRVQAAEAEKAGPEKGSIKDQLKDKKVKCRICSGEHFTARCPFKDTMAPVDETAAAGAEPGADDVPAAGGLGAGTSSYVPPHLRKGAAAGGERMAGKYEKDDLATLRVTNVSELAEESELRDLFERFGRVTRVFLARDRETQRAKGFAFISFADRTDAARACEKMDGFGYRHLILRVEFAKRAT</sequence>
<evidence type="ECO:0000255" key="1">
    <source>
        <dbReference type="HAMAP-Rule" id="MF_03006"/>
    </source>
</evidence>
<evidence type="ECO:0000256" key="2">
    <source>
        <dbReference type="SAM" id="MobiDB-lite"/>
    </source>
</evidence>
<name>EIF3G_ASPFU</name>
<gene>
    <name type="primary">tif35</name>
    <name type="ORF">AFUA_2G09870</name>
</gene>
<comment type="function">
    <text evidence="1">RNA-binding component of the eukaryotic translation initiation factor 3 (eIF-3) complex, which is involved in protein synthesis of a specialized repertoire of mRNAs and, together with other initiation factors, stimulates binding of mRNA and methionyl-tRNAi to the 40S ribosome. The eIF-3 complex specifically targets and initiates translation of a subset of mRNAs involved in cell proliferation. This subunit can bind 18S rRNA.</text>
</comment>
<comment type="subunit">
    <text evidence="1">Component of the eukaryotic translation initiation factor 3 (eIF-3) complex.</text>
</comment>
<comment type="subcellular location">
    <subcellularLocation>
        <location evidence="1">Cytoplasm</location>
    </subcellularLocation>
</comment>
<comment type="similarity">
    <text evidence="1">Belongs to the eIF-3 subunit G family.</text>
</comment>
<accession>Q4X1I3</accession>
<keyword id="KW-0963">Cytoplasm</keyword>
<keyword id="KW-0396">Initiation factor</keyword>
<keyword id="KW-0648">Protein biosynthesis</keyword>
<keyword id="KW-1185">Reference proteome</keyword>
<keyword id="KW-0694">RNA-binding</keyword>
<organism>
    <name type="scientific">Aspergillus fumigatus (strain ATCC MYA-4609 / CBS 101355 / FGSC A1100 / Af293)</name>
    <name type="common">Neosartorya fumigata</name>
    <dbReference type="NCBI Taxonomy" id="330879"/>
    <lineage>
        <taxon>Eukaryota</taxon>
        <taxon>Fungi</taxon>
        <taxon>Dikarya</taxon>
        <taxon>Ascomycota</taxon>
        <taxon>Pezizomycotina</taxon>
        <taxon>Eurotiomycetes</taxon>
        <taxon>Eurotiomycetidae</taxon>
        <taxon>Eurotiales</taxon>
        <taxon>Aspergillaceae</taxon>
        <taxon>Aspergillus</taxon>
        <taxon>Aspergillus subgen. Fumigati</taxon>
    </lineage>
</organism>
<protein>
    <recommendedName>
        <fullName evidence="1">Eukaryotic translation initiation factor 3 subunit G</fullName>
        <shortName evidence="1">eIF3g</shortName>
    </recommendedName>
    <alternativeName>
        <fullName evidence="1">Eukaryotic translation initiation factor 3 RNA-binding subunit</fullName>
        <shortName evidence="1">eIF-3 RNA-binding subunit</shortName>
    </alternativeName>
    <alternativeName>
        <fullName evidence="1">Translation initiation factor eIF3 p33 subunit homolog</fullName>
        <shortName evidence="1">eIF3 p33 homolog</shortName>
    </alternativeName>
</protein>